<accession>P40273</accession>
<sequence>MSDAAVPPKKASPKKAAAKKASPKKSAARKTAAKKTAKKPAVRKPAAKKRAAPKKKPAAAKKPAAKKAPKKAVKKAPKKK</sequence>
<feature type="chain" id="PRO_0000195994" description="Histone H1.M6.1">
    <location>
        <begin position="1"/>
        <end position="80"/>
    </location>
</feature>
<feature type="region of interest" description="Disordered" evidence="2">
    <location>
        <begin position="1"/>
        <end position="80"/>
    </location>
</feature>
<feature type="compositionally biased region" description="Basic residues" evidence="2">
    <location>
        <begin position="11"/>
        <end position="80"/>
    </location>
</feature>
<evidence type="ECO:0000250" key="1"/>
<evidence type="ECO:0000256" key="2">
    <source>
        <dbReference type="SAM" id="MobiDB-lite"/>
    </source>
</evidence>
<reference key="1">
    <citation type="journal article" date="1994" name="Mol. Biochem. Parasitol.">
        <title>A gene family encoding heterogeneous histone H1 proteins in Trypanosoma cruzi.</title>
        <authorList>
            <person name="Aaslund L."/>
            <person name="Carlsson L."/>
            <person name="Henriksson J."/>
            <person name="Rydaaker M."/>
            <person name="Toro G.C."/>
            <person name="Galanti N."/>
            <person name="Pettersson U."/>
        </authorList>
    </citation>
    <scope>NUCLEOTIDE SEQUENCE [GENOMIC DNA]</scope>
    <source>
        <strain>Tulahuen 2</strain>
    </source>
</reference>
<proteinExistence type="inferred from homology"/>
<name>H161_TRYCR</name>
<comment type="subcellular location">
    <subcellularLocation>
        <location evidence="1">Nucleus</location>
    </subcellularLocation>
    <subcellularLocation>
        <location evidence="1">Chromosome</location>
    </subcellularLocation>
</comment>
<protein>
    <recommendedName>
        <fullName>Histone H1.M6.1</fullName>
    </recommendedName>
</protein>
<dbReference type="EMBL" id="L27119">
    <property type="protein sequence ID" value="AAA66483.1"/>
    <property type="molecule type" value="Genomic_DNA"/>
</dbReference>
<dbReference type="GO" id="GO:0000786">
    <property type="term" value="C:nucleosome"/>
    <property type="evidence" value="ECO:0007669"/>
    <property type="project" value="InterPro"/>
</dbReference>
<dbReference type="GO" id="GO:0005634">
    <property type="term" value="C:nucleus"/>
    <property type="evidence" value="ECO:0007669"/>
    <property type="project" value="UniProtKB-SubCell"/>
</dbReference>
<dbReference type="GO" id="GO:0003677">
    <property type="term" value="F:DNA binding"/>
    <property type="evidence" value="ECO:0007669"/>
    <property type="project" value="UniProtKB-KW"/>
</dbReference>
<dbReference type="GO" id="GO:0030527">
    <property type="term" value="F:structural constituent of chromatin"/>
    <property type="evidence" value="ECO:0007669"/>
    <property type="project" value="InterPro"/>
</dbReference>
<dbReference type="GO" id="GO:0006334">
    <property type="term" value="P:nucleosome assembly"/>
    <property type="evidence" value="ECO:0007669"/>
    <property type="project" value="InterPro"/>
</dbReference>
<dbReference type="InterPro" id="IPR005819">
    <property type="entry name" value="H1/H5"/>
</dbReference>
<dbReference type="PRINTS" id="PR00624">
    <property type="entry name" value="HISTONEH5"/>
</dbReference>
<organism>
    <name type="scientific">Trypanosoma cruzi</name>
    <dbReference type="NCBI Taxonomy" id="5693"/>
    <lineage>
        <taxon>Eukaryota</taxon>
        <taxon>Discoba</taxon>
        <taxon>Euglenozoa</taxon>
        <taxon>Kinetoplastea</taxon>
        <taxon>Metakinetoplastina</taxon>
        <taxon>Trypanosomatida</taxon>
        <taxon>Trypanosomatidae</taxon>
        <taxon>Trypanosoma</taxon>
        <taxon>Schizotrypanum</taxon>
    </lineage>
</organism>
<keyword id="KW-0158">Chromosome</keyword>
<keyword id="KW-0238">DNA-binding</keyword>
<keyword id="KW-0539">Nucleus</keyword>